<feature type="chain" id="PRO_0000445786" description="Alpha-1,3-arabinosyltransferase XAT2">
    <location>
        <begin position="1"/>
        <end position="583"/>
    </location>
</feature>
<feature type="topological domain" description="Cytoplasmic" evidence="6">
    <location>
        <begin position="1"/>
        <end position="21"/>
    </location>
</feature>
<feature type="transmembrane region" description="Helical; Signal-anchor for type II membrane protein" evidence="1">
    <location>
        <begin position="22"/>
        <end position="42"/>
    </location>
</feature>
<feature type="topological domain" description="Lumenal" evidence="6">
    <location>
        <begin position="43"/>
        <end position="583"/>
    </location>
</feature>
<feature type="region of interest" description="Disordered" evidence="3">
    <location>
        <begin position="73"/>
        <end position="178"/>
    </location>
</feature>
<feature type="compositionally biased region" description="Basic and acidic residues" evidence="3">
    <location>
        <begin position="102"/>
        <end position="121"/>
    </location>
</feature>
<feature type="compositionally biased region" description="Basic and acidic residues" evidence="3">
    <location>
        <begin position="135"/>
        <end position="146"/>
    </location>
</feature>
<feature type="compositionally biased region" description="Polar residues" evidence="3">
    <location>
        <begin position="149"/>
        <end position="160"/>
    </location>
</feature>
<feature type="compositionally biased region" description="Basic and acidic residues" evidence="3">
    <location>
        <begin position="162"/>
        <end position="178"/>
    </location>
</feature>
<feature type="glycosylation site" description="N-linked (GlcNAc...) asparagine" evidence="2">
    <location>
        <position position="158"/>
    </location>
</feature>
<feature type="glycosylation site" description="N-linked (GlcNAc...) asparagine" evidence="2">
    <location>
        <position position="229"/>
    </location>
</feature>
<feature type="glycosylation site" description="N-linked (GlcNAc...) asparagine" evidence="2">
    <location>
        <position position="382"/>
    </location>
</feature>
<feature type="glycosylation site" description="N-linked (GlcNAc...) asparagine" evidence="2">
    <location>
        <position position="450"/>
    </location>
</feature>
<feature type="glycosylation site" description="N-linked (GlcNAc...) asparagine" evidence="2">
    <location>
        <position position="485"/>
    </location>
</feature>
<gene>
    <name evidence="5" type="primary">XAT2</name>
    <name evidence="9" type="ordered locus">Os02g0330200</name>
    <name evidence="6" type="ordered locus">LOC_Os02g22480</name>
    <name evidence="8" type="ORF">OJ1116_E03.2</name>
    <name evidence="10" type="ORF">OsJ_06523</name>
</gene>
<keyword id="KW-0961">Cell wall biogenesis/degradation</keyword>
<keyword id="KW-0325">Glycoprotein</keyword>
<keyword id="KW-0328">Glycosyltransferase</keyword>
<keyword id="KW-0333">Golgi apparatus</keyword>
<keyword id="KW-0472">Membrane</keyword>
<keyword id="KW-1185">Reference proteome</keyword>
<keyword id="KW-0735">Signal-anchor</keyword>
<keyword id="KW-0808">Transferase</keyword>
<keyword id="KW-0812">Transmembrane</keyword>
<keyword id="KW-1133">Transmembrane helix</keyword>
<accession>Q6ZFR0</accession>
<organism>
    <name type="scientific">Oryza sativa subsp. japonica</name>
    <name type="common">Rice</name>
    <dbReference type="NCBI Taxonomy" id="39947"/>
    <lineage>
        <taxon>Eukaryota</taxon>
        <taxon>Viridiplantae</taxon>
        <taxon>Streptophyta</taxon>
        <taxon>Embryophyta</taxon>
        <taxon>Tracheophyta</taxon>
        <taxon>Spermatophyta</taxon>
        <taxon>Magnoliopsida</taxon>
        <taxon>Liliopsida</taxon>
        <taxon>Poales</taxon>
        <taxon>Poaceae</taxon>
        <taxon>BOP clade</taxon>
        <taxon>Oryzoideae</taxon>
        <taxon>Oryzeae</taxon>
        <taxon>Oryzinae</taxon>
        <taxon>Oryza</taxon>
        <taxon>Oryza sativa</taxon>
    </lineage>
</organism>
<protein>
    <recommendedName>
        <fullName evidence="6">Alpha-1,3-arabinosyltransferase XAT2</fullName>
        <ecNumber evidence="4">2.4.2.-</ecNumber>
    </recommendedName>
    <alternativeName>
        <fullName evidence="5">Xylan arabinosyltransferase 2</fullName>
        <shortName evidence="5">OsXAT2</shortName>
    </alternativeName>
</protein>
<proteinExistence type="evidence at protein level"/>
<comment type="function">
    <text evidence="4">Glycosyltransferase involved in the arabinosylation of xylan, the major hemicellulose (non-cellulosic component) of primary and secondary walls of angiosperms (PubMed:22215597). Possesses alpha-1,3-arabinosyltransferase activity, transferring an arabinofuranose residue to the xylan backbone (PubMed:22215597).</text>
</comment>
<comment type="pathway">
    <text evidence="6">Glycan metabolism.</text>
</comment>
<comment type="subcellular location">
    <subcellularLocation>
        <location evidence="7">Golgi apparatus membrane</location>
        <topology evidence="1">Single-pass type II membrane protein</topology>
    </subcellularLocation>
</comment>
<comment type="similarity">
    <text evidence="6">Belongs to the glycosyltransferase 61 family.</text>
</comment>
<reference key="1">
    <citation type="journal article" date="2005" name="Nature">
        <title>The map-based sequence of the rice genome.</title>
        <authorList>
            <consortium name="International rice genome sequencing project (IRGSP)"/>
        </authorList>
    </citation>
    <scope>NUCLEOTIDE SEQUENCE [LARGE SCALE GENOMIC DNA]</scope>
    <source>
        <strain>cv. Nipponbare</strain>
    </source>
</reference>
<reference key="2">
    <citation type="journal article" date="2008" name="Nucleic Acids Res.">
        <title>The rice annotation project database (RAP-DB): 2008 update.</title>
        <authorList>
            <consortium name="The rice annotation project (RAP)"/>
        </authorList>
    </citation>
    <scope>GENOME REANNOTATION</scope>
    <source>
        <strain>cv. Nipponbare</strain>
    </source>
</reference>
<reference key="3">
    <citation type="journal article" date="2013" name="Rice">
        <title>Improvement of the Oryza sativa Nipponbare reference genome using next generation sequence and optical map data.</title>
        <authorList>
            <person name="Kawahara Y."/>
            <person name="de la Bastide M."/>
            <person name="Hamilton J.P."/>
            <person name="Kanamori H."/>
            <person name="McCombie W.R."/>
            <person name="Ouyang S."/>
            <person name="Schwartz D.C."/>
            <person name="Tanaka T."/>
            <person name="Wu J."/>
            <person name="Zhou S."/>
            <person name="Childs K.L."/>
            <person name="Davidson R.M."/>
            <person name="Lin H."/>
            <person name="Quesada-Ocampo L."/>
            <person name="Vaillancourt B."/>
            <person name="Sakai H."/>
            <person name="Lee S.S."/>
            <person name="Kim J."/>
            <person name="Numa H."/>
            <person name="Itoh T."/>
            <person name="Buell C.R."/>
            <person name="Matsumoto T."/>
        </authorList>
    </citation>
    <scope>GENOME REANNOTATION</scope>
    <source>
        <strain>cv. Nipponbare</strain>
    </source>
</reference>
<reference key="4">
    <citation type="journal article" date="2005" name="PLoS Biol.">
        <title>The genomes of Oryza sativa: a history of duplications.</title>
        <authorList>
            <person name="Yu J."/>
            <person name="Wang J."/>
            <person name="Lin W."/>
            <person name="Li S."/>
            <person name="Li H."/>
            <person name="Zhou J."/>
            <person name="Ni P."/>
            <person name="Dong W."/>
            <person name="Hu S."/>
            <person name="Zeng C."/>
            <person name="Zhang J."/>
            <person name="Zhang Y."/>
            <person name="Li R."/>
            <person name="Xu Z."/>
            <person name="Li S."/>
            <person name="Li X."/>
            <person name="Zheng H."/>
            <person name="Cong L."/>
            <person name="Lin L."/>
            <person name="Yin J."/>
            <person name="Geng J."/>
            <person name="Li G."/>
            <person name="Shi J."/>
            <person name="Liu J."/>
            <person name="Lv H."/>
            <person name="Li J."/>
            <person name="Wang J."/>
            <person name="Deng Y."/>
            <person name="Ran L."/>
            <person name="Shi X."/>
            <person name="Wang X."/>
            <person name="Wu Q."/>
            <person name="Li C."/>
            <person name="Ren X."/>
            <person name="Wang J."/>
            <person name="Wang X."/>
            <person name="Li D."/>
            <person name="Liu D."/>
            <person name="Zhang X."/>
            <person name="Ji Z."/>
            <person name="Zhao W."/>
            <person name="Sun Y."/>
            <person name="Zhang Z."/>
            <person name="Bao J."/>
            <person name="Han Y."/>
            <person name="Dong L."/>
            <person name="Ji J."/>
            <person name="Chen P."/>
            <person name="Wu S."/>
            <person name="Liu J."/>
            <person name="Xiao Y."/>
            <person name="Bu D."/>
            <person name="Tan J."/>
            <person name="Yang L."/>
            <person name="Ye C."/>
            <person name="Zhang J."/>
            <person name="Xu J."/>
            <person name="Zhou Y."/>
            <person name="Yu Y."/>
            <person name="Zhang B."/>
            <person name="Zhuang S."/>
            <person name="Wei H."/>
            <person name="Liu B."/>
            <person name="Lei M."/>
            <person name="Yu H."/>
            <person name="Li Y."/>
            <person name="Xu H."/>
            <person name="Wei S."/>
            <person name="He X."/>
            <person name="Fang L."/>
            <person name="Zhang Z."/>
            <person name="Zhang Y."/>
            <person name="Huang X."/>
            <person name="Su Z."/>
            <person name="Tong W."/>
            <person name="Li J."/>
            <person name="Tong Z."/>
            <person name="Li S."/>
            <person name="Ye J."/>
            <person name="Wang L."/>
            <person name="Fang L."/>
            <person name="Lei T."/>
            <person name="Chen C.-S."/>
            <person name="Chen H.-C."/>
            <person name="Xu Z."/>
            <person name="Li H."/>
            <person name="Huang H."/>
            <person name="Zhang F."/>
            <person name="Xu H."/>
            <person name="Li N."/>
            <person name="Zhao C."/>
            <person name="Li S."/>
            <person name="Dong L."/>
            <person name="Huang Y."/>
            <person name="Li L."/>
            <person name="Xi Y."/>
            <person name="Qi Q."/>
            <person name="Li W."/>
            <person name="Zhang B."/>
            <person name="Hu W."/>
            <person name="Zhang Y."/>
            <person name="Tian X."/>
            <person name="Jiao Y."/>
            <person name="Liang X."/>
            <person name="Jin J."/>
            <person name="Gao L."/>
            <person name="Zheng W."/>
            <person name="Hao B."/>
            <person name="Liu S.-M."/>
            <person name="Wang W."/>
            <person name="Yuan L."/>
            <person name="Cao M."/>
            <person name="McDermott J."/>
            <person name="Samudrala R."/>
            <person name="Wang J."/>
            <person name="Wong G.K.-S."/>
            <person name="Yang H."/>
        </authorList>
    </citation>
    <scope>NUCLEOTIDE SEQUENCE [LARGE SCALE GENOMIC DNA]</scope>
    <source>
        <strain>cv. Nipponbare</strain>
    </source>
</reference>
<reference key="5">
    <citation type="journal article" date="2012" name="Proc. Natl. Acad. Sci. U.S.A.">
        <title>Glycosyl transferases in family 61 mediate arabinofuranosyl transfer onto xylan in grasses.</title>
        <authorList>
            <person name="Anders N."/>
            <person name="Wilkinson M.D."/>
            <person name="Lovegrove A."/>
            <person name="Freeman J."/>
            <person name="Tryfona T."/>
            <person name="Pellny T.K."/>
            <person name="Weimar T."/>
            <person name="Mortimer J.C."/>
            <person name="Stott K."/>
            <person name="Baker J.M."/>
            <person name="Defoin-Platel M."/>
            <person name="Shewry P.R."/>
            <person name="Dupree P."/>
            <person name="Mitchell R.A."/>
        </authorList>
    </citation>
    <scope>FUNCTION</scope>
    <scope>CATALYTIC ACTIVITY</scope>
    <scope>SUBCELLULAR LOCATION</scope>
</reference>
<sequence length="583" mass="66222">MKPVERAKLVRSLRQESRRLRLLVLVIGFFLVTLTFVVISKPDALLFNLNGRLSVDHAPRSLLIRQRIHADSRRSADTFPAAEDPKVVDEDEGAEDATAKGTSEEEKRLLSSEPEQGKNEEAATASEVLGGGGEEDNKNGEEEGHTQHSKVTLPTVSNYTIRDAEDTDNGKQEDGKPNEKYEFEMDADKGDNVEPETDNEEWNKKPLCDFSNFRANVCEMRGNIRIHPNASSVMYMEPASSKREEIWKVKPYPRKGDELCLGHITEITVKSSKVAPECSKYHNVPAVVFALTGYTGNLFHDFTDVLVPLFTTASEFNGEVQFLITDMAIWWTRKYKVVFDKLSKYPLIDFNNDDQVHCFKHAIVGLHAYMEFTIDSSKAPHNYSMVDFNRFMRRTYSLPRDFVTALGEIPKAKPRLLIISRQRTRMFLNLNEIVAMAEEIGYEVVVEEANVSSDLSHFGKVVNSVDVMMGVHGAGLTNCVFLPQNATLIQIVPWGGLDWISRIDFGNPAEQMGLRYKQYSIGVHESSLTDQYPLDHEIFTNPLSFHKHGFEFIRQTFMDKQNVKLDCNRFKPVLLEVLDQLNQ</sequence>
<evidence type="ECO:0000255" key="1"/>
<evidence type="ECO:0000255" key="2">
    <source>
        <dbReference type="PROSITE-ProRule" id="PRU00498"/>
    </source>
</evidence>
<evidence type="ECO:0000256" key="3">
    <source>
        <dbReference type="SAM" id="MobiDB-lite"/>
    </source>
</evidence>
<evidence type="ECO:0000269" key="4">
    <source>
    </source>
</evidence>
<evidence type="ECO:0000303" key="5">
    <source>
    </source>
</evidence>
<evidence type="ECO:0000305" key="6"/>
<evidence type="ECO:0000305" key="7">
    <source>
    </source>
</evidence>
<evidence type="ECO:0000312" key="8">
    <source>
        <dbReference type="EMBL" id="BAD15592.1"/>
    </source>
</evidence>
<evidence type="ECO:0000312" key="9">
    <source>
        <dbReference type="EMBL" id="BAF08634.1"/>
    </source>
</evidence>
<evidence type="ECO:0000312" key="10">
    <source>
        <dbReference type="EMBL" id="EEE56880.1"/>
    </source>
</evidence>
<dbReference type="EC" id="2.4.2.-" evidence="4"/>
<dbReference type="EMBL" id="AP004177">
    <property type="protein sequence ID" value="BAD15592.1"/>
    <property type="molecule type" value="Genomic_DNA"/>
</dbReference>
<dbReference type="EMBL" id="AP008208">
    <property type="protein sequence ID" value="BAF08634.1"/>
    <property type="molecule type" value="Genomic_DNA"/>
</dbReference>
<dbReference type="EMBL" id="AP014958">
    <property type="protein sequence ID" value="BAS78435.1"/>
    <property type="molecule type" value="Genomic_DNA"/>
</dbReference>
<dbReference type="EMBL" id="CM000139">
    <property type="protein sequence ID" value="EEE56880.1"/>
    <property type="molecule type" value="Genomic_DNA"/>
</dbReference>
<dbReference type="RefSeq" id="NP_001403514.1">
    <property type="nucleotide sequence ID" value="NM_001416585.1"/>
</dbReference>
<dbReference type="RefSeq" id="XP_015622780.1">
    <property type="nucleotide sequence ID" value="XM_015767294.1"/>
</dbReference>
<dbReference type="SMR" id="Q6ZFR0"/>
<dbReference type="FunCoup" id="Q6ZFR0">
    <property type="interactions" value="126"/>
</dbReference>
<dbReference type="STRING" id="39947.Q6ZFR0"/>
<dbReference type="CAZy" id="GT61">
    <property type="family name" value="Glycosyltransferase Family 61"/>
</dbReference>
<dbReference type="GlyCosmos" id="Q6ZFR0">
    <property type="glycosylation" value="5 sites, No reported glycans"/>
</dbReference>
<dbReference type="PaxDb" id="39947-Q6ZFR0"/>
<dbReference type="EnsemblPlants" id="Os02t0330200-01">
    <property type="protein sequence ID" value="Os02t0330200-01"/>
    <property type="gene ID" value="Os02g0330200"/>
</dbReference>
<dbReference type="GeneID" id="4329205"/>
<dbReference type="Gramene" id="Os02t0330200-01">
    <property type="protein sequence ID" value="Os02t0330200-01"/>
    <property type="gene ID" value="Os02g0330200"/>
</dbReference>
<dbReference type="KEGG" id="dosa:Os02g0330200"/>
<dbReference type="eggNOG" id="KOG4698">
    <property type="taxonomic scope" value="Eukaryota"/>
</dbReference>
<dbReference type="HOGENOM" id="CLU_016869_3_1_1"/>
<dbReference type="InParanoid" id="Q6ZFR0"/>
<dbReference type="OMA" id="ADICEMN"/>
<dbReference type="OrthoDB" id="529273at2759"/>
<dbReference type="Proteomes" id="UP000000763">
    <property type="component" value="Chromosome 2"/>
</dbReference>
<dbReference type="Proteomes" id="UP000007752">
    <property type="component" value="Chromosome 2"/>
</dbReference>
<dbReference type="Proteomes" id="UP000059680">
    <property type="component" value="Chromosome 2"/>
</dbReference>
<dbReference type="GO" id="GO:0000139">
    <property type="term" value="C:Golgi membrane"/>
    <property type="evidence" value="ECO:0000314"/>
    <property type="project" value="UniProtKB"/>
</dbReference>
<dbReference type="GO" id="GO:0052636">
    <property type="term" value="F:arabinosyltransferase activity"/>
    <property type="evidence" value="ECO:0000314"/>
    <property type="project" value="UniProtKB"/>
</dbReference>
<dbReference type="GO" id="GO:0016757">
    <property type="term" value="F:glycosyltransferase activity"/>
    <property type="evidence" value="ECO:0000318"/>
    <property type="project" value="GO_Central"/>
</dbReference>
<dbReference type="GO" id="GO:0009664">
    <property type="term" value="P:plant-type cell wall organization"/>
    <property type="evidence" value="ECO:0000315"/>
    <property type="project" value="UniProtKB"/>
</dbReference>
<dbReference type="InterPro" id="IPR049625">
    <property type="entry name" value="Glyco_transf_61_cat"/>
</dbReference>
<dbReference type="InterPro" id="IPR007657">
    <property type="entry name" value="Glycosyltransferase_61"/>
</dbReference>
<dbReference type="PANTHER" id="PTHR20961:SF152">
    <property type="entry name" value="ALPHA-1,3-ARABINOSYLTRANSFERASE XAT2"/>
    <property type="match status" value="1"/>
</dbReference>
<dbReference type="PANTHER" id="PTHR20961">
    <property type="entry name" value="GLYCOSYLTRANSFERASE"/>
    <property type="match status" value="1"/>
</dbReference>
<dbReference type="Pfam" id="PF04577">
    <property type="entry name" value="Glyco_transf_61"/>
    <property type="match status" value="1"/>
</dbReference>
<name>XAT2_ORYSJ</name>